<name>Y317_STAAW</name>
<comment type="subcellular location">
    <subcellularLocation>
        <location evidence="2">Cell membrane</location>
        <topology evidence="2">Multi-pass membrane protein</topology>
    </subcellularLocation>
</comment>
<comment type="similarity">
    <text evidence="2">Belongs to the UPF0324 family.</text>
</comment>
<proteinExistence type="inferred from homology"/>
<protein>
    <recommendedName>
        <fullName>UPF0324 membrane protein MW0317</fullName>
    </recommendedName>
</protein>
<sequence length="331" mass="35754">MASLKNKHFMIGLTLTFIVALFSFLAAKLPILDKVGALTIAILIAILYRHFRGYPEQYSSGITFSSKYLLRFAIILYGLKLNIFDIIGQGSRLLAIDVGVVIFSIVMMLFVNKLLHGDKNIALLLGVGTGVCGAAAIAAVAPIFKSREKDTAISIGIIALIGTIFSLIYTAIYAIFSMTTNVYGAWSGVSLHEIAHVVLAGGFGGSDALKIALLGKLGRVFLLIPLTIVLILIMRFRSSESSSNGRISIPYFLIGFVIMALVNTYVTIPSALLNILNTVSTICLLMAMVALGLNVAFKDLKNRALKPLMTIIITSICLSSLAFIVVHWLYS</sequence>
<accession>Q8NYA5</accession>
<reference key="1">
    <citation type="journal article" date="2002" name="Lancet">
        <title>Genome and virulence determinants of high virulence community-acquired MRSA.</title>
        <authorList>
            <person name="Baba T."/>
            <person name="Takeuchi F."/>
            <person name="Kuroda M."/>
            <person name="Yuzawa H."/>
            <person name="Aoki K."/>
            <person name="Oguchi A."/>
            <person name="Nagai Y."/>
            <person name="Iwama N."/>
            <person name="Asano K."/>
            <person name="Naimi T."/>
            <person name="Kuroda H."/>
            <person name="Cui L."/>
            <person name="Yamamoto K."/>
            <person name="Hiramatsu K."/>
        </authorList>
    </citation>
    <scope>NUCLEOTIDE SEQUENCE [LARGE SCALE GENOMIC DNA]</scope>
    <source>
        <strain>MW2</strain>
    </source>
</reference>
<dbReference type="EMBL" id="BA000033">
    <property type="protein sequence ID" value="BAB94182.1"/>
    <property type="molecule type" value="Genomic_DNA"/>
</dbReference>
<dbReference type="RefSeq" id="WP_000157643.1">
    <property type="nucleotide sequence ID" value="NC_003923.1"/>
</dbReference>
<dbReference type="KEGG" id="sam:MW0317"/>
<dbReference type="HOGENOM" id="CLU_033541_0_1_9"/>
<dbReference type="GO" id="GO:0005886">
    <property type="term" value="C:plasma membrane"/>
    <property type="evidence" value="ECO:0007669"/>
    <property type="project" value="UniProtKB-SubCell"/>
</dbReference>
<dbReference type="InterPro" id="IPR018383">
    <property type="entry name" value="UPF0324_pro"/>
</dbReference>
<dbReference type="PANTHER" id="PTHR30106">
    <property type="entry name" value="INNER MEMBRANE PROTEIN YEIH-RELATED"/>
    <property type="match status" value="1"/>
</dbReference>
<dbReference type="PANTHER" id="PTHR30106:SF2">
    <property type="entry name" value="UPF0324 INNER MEMBRANE PROTEIN YEIH"/>
    <property type="match status" value="1"/>
</dbReference>
<dbReference type="Pfam" id="PF03601">
    <property type="entry name" value="Cons_hypoth698"/>
    <property type="match status" value="1"/>
</dbReference>
<gene>
    <name type="ordered locus">MW0317</name>
</gene>
<keyword id="KW-1003">Cell membrane</keyword>
<keyword id="KW-0472">Membrane</keyword>
<keyword id="KW-0812">Transmembrane</keyword>
<keyword id="KW-1133">Transmembrane helix</keyword>
<feature type="chain" id="PRO_0000157456" description="UPF0324 membrane protein MW0317">
    <location>
        <begin position="1"/>
        <end position="331"/>
    </location>
</feature>
<feature type="transmembrane region" description="Helical" evidence="1">
    <location>
        <begin position="9"/>
        <end position="26"/>
    </location>
</feature>
<feature type="transmembrane region" description="Helical" evidence="1">
    <location>
        <begin position="31"/>
        <end position="48"/>
    </location>
</feature>
<feature type="transmembrane region" description="Helical" evidence="1">
    <location>
        <begin position="69"/>
        <end position="88"/>
    </location>
</feature>
<feature type="transmembrane region" description="Helical" evidence="1">
    <location>
        <begin position="93"/>
        <end position="115"/>
    </location>
</feature>
<feature type="transmembrane region" description="Helical" evidence="1">
    <location>
        <begin position="122"/>
        <end position="144"/>
    </location>
</feature>
<feature type="transmembrane region" description="Helical" evidence="1">
    <location>
        <begin position="154"/>
        <end position="176"/>
    </location>
</feature>
<feature type="transmembrane region" description="Helical" evidence="1">
    <location>
        <begin position="183"/>
        <end position="202"/>
    </location>
</feature>
<feature type="transmembrane region" description="Helical" evidence="1">
    <location>
        <begin position="217"/>
        <end position="234"/>
    </location>
</feature>
<feature type="transmembrane region" description="Helical" evidence="1">
    <location>
        <begin position="247"/>
        <end position="269"/>
    </location>
</feature>
<feature type="transmembrane region" description="Helical" evidence="1">
    <location>
        <begin position="273"/>
        <end position="295"/>
    </location>
</feature>
<feature type="transmembrane region" description="Helical" evidence="1">
    <location>
        <begin position="308"/>
        <end position="330"/>
    </location>
</feature>
<evidence type="ECO:0000255" key="1"/>
<evidence type="ECO:0000305" key="2"/>
<organism>
    <name type="scientific">Staphylococcus aureus (strain MW2)</name>
    <dbReference type="NCBI Taxonomy" id="196620"/>
    <lineage>
        <taxon>Bacteria</taxon>
        <taxon>Bacillati</taxon>
        <taxon>Bacillota</taxon>
        <taxon>Bacilli</taxon>
        <taxon>Bacillales</taxon>
        <taxon>Staphylococcaceae</taxon>
        <taxon>Staphylococcus</taxon>
    </lineage>
</organism>